<reference key="1">
    <citation type="journal article" date="2011" name="MBio">
        <title>Novel metabolic attributes of the genus Cyanothece, comprising a group of unicellular nitrogen-fixing Cyanobacteria.</title>
        <authorList>
            <person name="Bandyopadhyay A."/>
            <person name="Elvitigala T."/>
            <person name="Welsh E."/>
            <person name="Stockel J."/>
            <person name="Liberton M."/>
            <person name="Min H."/>
            <person name="Sherman L.A."/>
            <person name="Pakrasi H.B."/>
        </authorList>
    </citation>
    <scope>NUCLEOTIDE SEQUENCE [LARGE SCALE GENOMIC DNA]</scope>
    <source>
        <strain>PCC 7424</strain>
    </source>
</reference>
<dbReference type="EMBL" id="CP001291">
    <property type="protein sequence ID" value="ACK72112.1"/>
    <property type="molecule type" value="Genomic_DNA"/>
</dbReference>
<dbReference type="RefSeq" id="WP_015955704.1">
    <property type="nucleotide sequence ID" value="NC_011729.1"/>
</dbReference>
<dbReference type="SMR" id="B7KI15"/>
<dbReference type="STRING" id="65393.PCC7424_3731"/>
<dbReference type="KEGG" id="cyc:PCC7424_3731"/>
<dbReference type="eggNOG" id="COG0103">
    <property type="taxonomic scope" value="Bacteria"/>
</dbReference>
<dbReference type="HOGENOM" id="CLU_046483_2_1_3"/>
<dbReference type="OrthoDB" id="9803965at2"/>
<dbReference type="Proteomes" id="UP000002384">
    <property type="component" value="Chromosome"/>
</dbReference>
<dbReference type="GO" id="GO:0022627">
    <property type="term" value="C:cytosolic small ribosomal subunit"/>
    <property type="evidence" value="ECO:0007669"/>
    <property type="project" value="TreeGrafter"/>
</dbReference>
<dbReference type="GO" id="GO:0003723">
    <property type="term" value="F:RNA binding"/>
    <property type="evidence" value="ECO:0007669"/>
    <property type="project" value="TreeGrafter"/>
</dbReference>
<dbReference type="GO" id="GO:0003735">
    <property type="term" value="F:structural constituent of ribosome"/>
    <property type="evidence" value="ECO:0007669"/>
    <property type="project" value="InterPro"/>
</dbReference>
<dbReference type="GO" id="GO:0006412">
    <property type="term" value="P:translation"/>
    <property type="evidence" value="ECO:0007669"/>
    <property type="project" value="UniProtKB-UniRule"/>
</dbReference>
<dbReference type="FunFam" id="3.30.230.10:FF:000001">
    <property type="entry name" value="30S ribosomal protein S9"/>
    <property type="match status" value="1"/>
</dbReference>
<dbReference type="Gene3D" id="3.30.230.10">
    <property type="match status" value="1"/>
</dbReference>
<dbReference type="HAMAP" id="MF_00532_B">
    <property type="entry name" value="Ribosomal_uS9_B"/>
    <property type="match status" value="1"/>
</dbReference>
<dbReference type="InterPro" id="IPR020568">
    <property type="entry name" value="Ribosomal_Su5_D2-typ_SF"/>
</dbReference>
<dbReference type="InterPro" id="IPR000754">
    <property type="entry name" value="Ribosomal_uS9"/>
</dbReference>
<dbReference type="InterPro" id="IPR023035">
    <property type="entry name" value="Ribosomal_uS9_bac/plastid"/>
</dbReference>
<dbReference type="InterPro" id="IPR020574">
    <property type="entry name" value="Ribosomal_uS9_CS"/>
</dbReference>
<dbReference type="InterPro" id="IPR014721">
    <property type="entry name" value="Ribsml_uS5_D2-typ_fold_subgr"/>
</dbReference>
<dbReference type="NCBIfam" id="NF001099">
    <property type="entry name" value="PRK00132.1"/>
    <property type="match status" value="1"/>
</dbReference>
<dbReference type="PANTHER" id="PTHR21569">
    <property type="entry name" value="RIBOSOMAL PROTEIN S9"/>
    <property type="match status" value="1"/>
</dbReference>
<dbReference type="PANTHER" id="PTHR21569:SF1">
    <property type="entry name" value="SMALL RIBOSOMAL SUBUNIT PROTEIN US9M"/>
    <property type="match status" value="1"/>
</dbReference>
<dbReference type="Pfam" id="PF00380">
    <property type="entry name" value="Ribosomal_S9"/>
    <property type="match status" value="1"/>
</dbReference>
<dbReference type="SUPFAM" id="SSF54211">
    <property type="entry name" value="Ribosomal protein S5 domain 2-like"/>
    <property type="match status" value="1"/>
</dbReference>
<dbReference type="PROSITE" id="PS00360">
    <property type="entry name" value="RIBOSOMAL_S9"/>
    <property type="match status" value="1"/>
</dbReference>
<gene>
    <name evidence="1" type="primary">rpsI</name>
    <name evidence="1" type="synonym">rps9</name>
    <name type="ordered locus">PCC7424_3731</name>
</gene>
<evidence type="ECO:0000255" key="1">
    <source>
        <dbReference type="HAMAP-Rule" id="MF_00532"/>
    </source>
</evidence>
<evidence type="ECO:0000256" key="2">
    <source>
        <dbReference type="SAM" id="MobiDB-lite"/>
    </source>
</evidence>
<evidence type="ECO:0000305" key="3"/>
<feature type="chain" id="PRO_1000128112" description="Small ribosomal subunit protein uS9">
    <location>
        <begin position="1"/>
        <end position="137"/>
    </location>
</feature>
<feature type="region of interest" description="Disordered" evidence="2">
    <location>
        <begin position="104"/>
        <end position="137"/>
    </location>
</feature>
<feature type="compositionally biased region" description="Basic residues" evidence="2">
    <location>
        <begin position="118"/>
        <end position="137"/>
    </location>
</feature>
<name>RS9_GLOC7</name>
<comment type="similarity">
    <text evidence="1">Belongs to the universal ribosomal protein uS9 family.</text>
</comment>
<organism>
    <name type="scientific">Gloeothece citriformis (strain PCC 7424)</name>
    <name type="common">Cyanothece sp. (strain PCC 7424)</name>
    <dbReference type="NCBI Taxonomy" id="65393"/>
    <lineage>
        <taxon>Bacteria</taxon>
        <taxon>Bacillati</taxon>
        <taxon>Cyanobacteriota</taxon>
        <taxon>Cyanophyceae</taxon>
        <taxon>Oscillatoriophycideae</taxon>
        <taxon>Chroococcales</taxon>
        <taxon>Aphanothecaceae</taxon>
        <taxon>Gloeothece</taxon>
        <taxon>Gloeothece citriformis</taxon>
    </lineage>
</organism>
<keyword id="KW-1185">Reference proteome</keyword>
<keyword id="KW-0687">Ribonucleoprotein</keyword>
<keyword id="KW-0689">Ribosomal protein</keyword>
<sequence length="137" mass="15167">MQATETKDRAVYWGTGRRKTSVARVRLIPGTGQVTVNGKPGDTYFNRIADYLQGIKAPLETLGLENEYDILVKAHGGGLTGQADAVKLGVARALCELAPENRQPLKSEGYLTRDPRAKERKKYGLHKARKAPQYSKR</sequence>
<protein>
    <recommendedName>
        <fullName evidence="1">Small ribosomal subunit protein uS9</fullName>
    </recommendedName>
    <alternativeName>
        <fullName evidence="3">30S ribosomal protein S9</fullName>
    </alternativeName>
</protein>
<accession>B7KI15</accession>
<proteinExistence type="inferred from homology"/>